<dbReference type="EMBL" id="CP001043">
    <property type="protein sequence ID" value="ACC70102.1"/>
    <property type="molecule type" value="Genomic_DNA"/>
</dbReference>
<dbReference type="RefSeq" id="WP_012400321.1">
    <property type="nucleotide sequence ID" value="NZ_CADFGH010000007.1"/>
</dbReference>
<dbReference type="SMR" id="B2JG20"/>
<dbReference type="STRING" id="391038.Bphy_0913"/>
<dbReference type="KEGG" id="bph:Bphy_0913"/>
<dbReference type="eggNOG" id="COG0238">
    <property type="taxonomic scope" value="Bacteria"/>
</dbReference>
<dbReference type="HOGENOM" id="CLU_148710_0_3_4"/>
<dbReference type="OrthoDB" id="9812008at2"/>
<dbReference type="Proteomes" id="UP000001192">
    <property type="component" value="Chromosome 1"/>
</dbReference>
<dbReference type="GO" id="GO:0022627">
    <property type="term" value="C:cytosolic small ribosomal subunit"/>
    <property type="evidence" value="ECO:0007669"/>
    <property type="project" value="TreeGrafter"/>
</dbReference>
<dbReference type="GO" id="GO:0070181">
    <property type="term" value="F:small ribosomal subunit rRNA binding"/>
    <property type="evidence" value="ECO:0007669"/>
    <property type="project" value="TreeGrafter"/>
</dbReference>
<dbReference type="GO" id="GO:0003735">
    <property type="term" value="F:structural constituent of ribosome"/>
    <property type="evidence" value="ECO:0007669"/>
    <property type="project" value="InterPro"/>
</dbReference>
<dbReference type="GO" id="GO:0006412">
    <property type="term" value="P:translation"/>
    <property type="evidence" value="ECO:0007669"/>
    <property type="project" value="UniProtKB-UniRule"/>
</dbReference>
<dbReference type="Gene3D" id="4.10.640.10">
    <property type="entry name" value="Ribosomal protein S18"/>
    <property type="match status" value="1"/>
</dbReference>
<dbReference type="HAMAP" id="MF_00270">
    <property type="entry name" value="Ribosomal_bS18"/>
    <property type="match status" value="1"/>
</dbReference>
<dbReference type="InterPro" id="IPR001648">
    <property type="entry name" value="Ribosomal_bS18"/>
</dbReference>
<dbReference type="InterPro" id="IPR018275">
    <property type="entry name" value="Ribosomal_bS18_CS"/>
</dbReference>
<dbReference type="InterPro" id="IPR036870">
    <property type="entry name" value="Ribosomal_bS18_sf"/>
</dbReference>
<dbReference type="NCBIfam" id="TIGR00165">
    <property type="entry name" value="S18"/>
    <property type="match status" value="1"/>
</dbReference>
<dbReference type="PANTHER" id="PTHR13479">
    <property type="entry name" value="30S RIBOSOMAL PROTEIN S18"/>
    <property type="match status" value="1"/>
</dbReference>
<dbReference type="PANTHER" id="PTHR13479:SF40">
    <property type="entry name" value="SMALL RIBOSOMAL SUBUNIT PROTEIN BS18M"/>
    <property type="match status" value="1"/>
</dbReference>
<dbReference type="Pfam" id="PF01084">
    <property type="entry name" value="Ribosomal_S18"/>
    <property type="match status" value="1"/>
</dbReference>
<dbReference type="PRINTS" id="PR00974">
    <property type="entry name" value="RIBOSOMALS18"/>
</dbReference>
<dbReference type="SUPFAM" id="SSF46911">
    <property type="entry name" value="Ribosomal protein S18"/>
    <property type="match status" value="1"/>
</dbReference>
<dbReference type="PROSITE" id="PS00057">
    <property type="entry name" value="RIBOSOMAL_S18"/>
    <property type="match status" value="1"/>
</dbReference>
<keyword id="KW-1185">Reference proteome</keyword>
<keyword id="KW-0687">Ribonucleoprotein</keyword>
<keyword id="KW-0689">Ribosomal protein</keyword>
<keyword id="KW-0694">RNA-binding</keyword>
<keyword id="KW-0699">rRNA-binding</keyword>
<protein>
    <recommendedName>
        <fullName evidence="1">Small ribosomal subunit protein bS18</fullName>
    </recommendedName>
    <alternativeName>
        <fullName evidence="2">30S ribosomal protein S18</fullName>
    </alternativeName>
</protein>
<organism>
    <name type="scientific">Paraburkholderia phymatum (strain DSM 17167 / CIP 108236 / LMG 21445 / STM815)</name>
    <name type="common">Burkholderia phymatum</name>
    <dbReference type="NCBI Taxonomy" id="391038"/>
    <lineage>
        <taxon>Bacteria</taxon>
        <taxon>Pseudomonadati</taxon>
        <taxon>Pseudomonadota</taxon>
        <taxon>Betaproteobacteria</taxon>
        <taxon>Burkholderiales</taxon>
        <taxon>Burkholderiaceae</taxon>
        <taxon>Paraburkholderia</taxon>
    </lineage>
</organism>
<evidence type="ECO:0000255" key="1">
    <source>
        <dbReference type="HAMAP-Rule" id="MF_00270"/>
    </source>
</evidence>
<evidence type="ECO:0000305" key="2"/>
<feature type="chain" id="PRO_1000114407" description="Small ribosomal subunit protein bS18">
    <location>
        <begin position="1"/>
        <end position="91"/>
    </location>
</feature>
<sequence length="91" mass="10655">MPRPTGKKFDKRRQQQNPLFKRKKFCRFTAAGVEQIDYKDIDTLKDFIGENGKITPARLTGTKAHYQRQLDTAIKRARFLALMPYTDQHKA</sequence>
<reference key="1">
    <citation type="journal article" date="2014" name="Stand. Genomic Sci.">
        <title>Complete genome sequence of Burkholderia phymatum STM815(T), a broad host range and efficient nitrogen-fixing symbiont of Mimosa species.</title>
        <authorList>
            <person name="Moulin L."/>
            <person name="Klonowska A."/>
            <person name="Caroline B."/>
            <person name="Booth K."/>
            <person name="Vriezen J.A."/>
            <person name="Melkonian R."/>
            <person name="James E.K."/>
            <person name="Young J.P."/>
            <person name="Bena G."/>
            <person name="Hauser L."/>
            <person name="Land M."/>
            <person name="Kyrpides N."/>
            <person name="Bruce D."/>
            <person name="Chain P."/>
            <person name="Copeland A."/>
            <person name="Pitluck S."/>
            <person name="Woyke T."/>
            <person name="Lizotte-Waniewski M."/>
            <person name="Bristow J."/>
            <person name="Riley M."/>
        </authorList>
    </citation>
    <scope>NUCLEOTIDE SEQUENCE [LARGE SCALE GENOMIC DNA]</scope>
    <source>
        <strain>DSM 17167 / CIP 108236 / LMG 21445 / STM815</strain>
    </source>
</reference>
<comment type="function">
    <text evidence="1">Binds as a heterodimer with protein bS6 to the central domain of the 16S rRNA, where it helps stabilize the platform of the 30S subunit.</text>
</comment>
<comment type="subunit">
    <text evidence="1">Part of the 30S ribosomal subunit. Forms a tight heterodimer with protein bS6.</text>
</comment>
<comment type="similarity">
    <text evidence="1">Belongs to the bacterial ribosomal protein bS18 family.</text>
</comment>
<name>RS18_PARP8</name>
<proteinExistence type="inferred from homology"/>
<accession>B2JG20</accession>
<gene>
    <name evidence="1" type="primary">rpsR</name>
    <name type="ordered locus">Bphy_0913</name>
</gene>